<feature type="chain" id="PRO_0000146591" description="Small ribosomal subunit protein uS10">
    <location>
        <begin position="1"/>
        <end position="103"/>
    </location>
</feature>
<name>RS10_SHEON</name>
<proteinExistence type="inferred from homology"/>
<accession>Q8EK69</accession>
<comment type="function">
    <text evidence="1">Involved in the binding of tRNA to the ribosomes.</text>
</comment>
<comment type="subunit">
    <text evidence="1">Part of the 30S ribosomal subunit.</text>
</comment>
<comment type="similarity">
    <text evidence="1">Belongs to the universal ribosomal protein uS10 family.</text>
</comment>
<reference key="1">
    <citation type="journal article" date="2002" name="Nat. Biotechnol.">
        <title>Genome sequence of the dissimilatory metal ion-reducing bacterium Shewanella oneidensis.</title>
        <authorList>
            <person name="Heidelberg J.F."/>
            <person name="Paulsen I.T."/>
            <person name="Nelson K.E."/>
            <person name="Gaidos E.J."/>
            <person name="Nelson W.C."/>
            <person name="Read T.D."/>
            <person name="Eisen J.A."/>
            <person name="Seshadri R."/>
            <person name="Ward N.L."/>
            <person name="Methe B.A."/>
            <person name="Clayton R.A."/>
            <person name="Meyer T."/>
            <person name="Tsapin A."/>
            <person name="Scott J."/>
            <person name="Beanan M.J."/>
            <person name="Brinkac L.M."/>
            <person name="Daugherty S.C."/>
            <person name="DeBoy R.T."/>
            <person name="Dodson R.J."/>
            <person name="Durkin A.S."/>
            <person name="Haft D.H."/>
            <person name="Kolonay J.F."/>
            <person name="Madupu R."/>
            <person name="Peterson J.D."/>
            <person name="Umayam L.A."/>
            <person name="White O."/>
            <person name="Wolf A.M."/>
            <person name="Vamathevan J.J."/>
            <person name="Weidman J.F."/>
            <person name="Impraim M."/>
            <person name="Lee K."/>
            <person name="Berry K.J."/>
            <person name="Lee C."/>
            <person name="Mueller J."/>
            <person name="Khouri H.M."/>
            <person name="Gill J."/>
            <person name="Utterback T.R."/>
            <person name="McDonald L.A."/>
            <person name="Feldblyum T.V."/>
            <person name="Smith H.O."/>
            <person name="Venter J.C."/>
            <person name="Nealson K.H."/>
            <person name="Fraser C.M."/>
        </authorList>
    </citation>
    <scope>NUCLEOTIDE SEQUENCE [LARGE SCALE GENOMIC DNA]</scope>
    <source>
        <strain>ATCC 700550 / JCM 31522 / CIP 106686 / LMG 19005 / NCIMB 14063 / MR-1</strain>
    </source>
</reference>
<sequence>MQNQRIRIRLKGFDHRLIDQSTAEIVETAKRTGAQVRGPIPLPTRKERYTVLISPHVNKDARDQYELRTHKRLVDIVEPTEKTVDALMRLDLAAGVDVQISLG</sequence>
<protein>
    <recommendedName>
        <fullName evidence="1">Small ribosomal subunit protein uS10</fullName>
    </recommendedName>
    <alternativeName>
        <fullName evidence="2">30S ribosomal protein S10</fullName>
    </alternativeName>
</protein>
<gene>
    <name evidence="1" type="primary">rpsJ</name>
    <name type="ordered locus">SO_0230</name>
</gene>
<keyword id="KW-1185">Reference proteome</keyword>
<keyword id="KW-0687">Ribonucleoprotein</keyword>
<keyword id="KW-0689">Ribosomal protein</keyword>
<dbReference type="EMBL" id="AE014299">
    <property type="protein sequence ID" value="AAN53315.1"/>
    <property type="molecule type" value="Genomic_DNA"/>
</dbReference>
<dbReference type="RefSeq" id="NP_715870.1">
    <property type="nucleotide sequence ID" value="NC_004347.2"/>
</dbReference>
<dbReference type="RefSeq" id="WP_011070616.1">
    <property type="nucleotide sequence ID" value="NZ_CP053946.1"/>
</dbReference>
<dbReference type="SMR" id="Q8EK69"/>
<dbReference type="STRING" id="211586.SO_0230"/>
<dbReference type="PaxDb" id="211586-SO_0230"/>
<dbReference type="GeneID" id="94726185"/>
<dbReference type="KEGG" id="son:SO_0230"/>
<dbReference type="PATRIC" id="fig|211586.12.peg.218"/>
<dbReference type="eggNOG" id="COG0051">
    <property type="taxonomic scope" value="Bacteria"/>
</dbReference>
<dbReference type="HOGENOM" id="CLU_122625_1_3_6"/>
<dbReference type="OrthoDB" id="9804464at2"/>
<dbReference type="PhylomeDB" id="Q8EK69"/>
<dbReference type="BioCyc" id="SONE211586:G1GMP-219-MONOMER"/>
<dbReference type="Proteomes" id="UP000008186">
    <property type="component" value="Chromosome"/>
</dbReference>
<dbReference type="GO" id="GO:0015935">
    <property type="term" value="C:small ribosomal subunit"/>
    <property type="evidence" value="ECO:0000318"/>
    <property type="project" value="GO_Central"/>
</dbReference>
<dbReference type="GO" id="GO:0003735">
    <property type="term" value="F:structural constituent of ribosome"/>
    <property type="evidence" value="ECO:0000318"/>
    <property type="project" value="GO_Central"/>
</dbReference>
<dbReference type="GO" id="GO:0000049">
    <property type="term" value="F:tRNA binding"/>
    <property type="evidence" value="ECO:0007669"/>
    <property type="project" value="UniProtKB-UniRule"/>
</dbReference>
<dbReference type="GO" id="GO:0006412">
    <property type="term" value="P:translation"/>
    <property type="evidence" value="ECO:0007669"/>
    <property type="project" value="UniProtKB-UniRule"/>
</dbReference>
<dbReference type="FunFam" id="3.30.70.600:FF:000001">
    <property type="entry name" value="30S ribosomal protein S10"/>
    <property type="match status" value="1"/>
</dbReference>
<dbReference type="Gene3D" id="3.30.70.600">
    <property type="entry name" value="Ribosomal protein S10 domain"/>
    <property type="match status" value="1"/>
</dbReference>
<dbReference type="HAMAP" id="MF_00508">
    <property type="entry name" value="Ribosomal_uS10"/>
    <property type="match status" value="1"/>
</dbReference>
<dbReference type="InterPro" id="IPR001848">
    <property type="entry name" value="Ribosomal_uS10"/>
</dbReference>
<dbReference type="InterPro" id="IPR018268">
    <property type="entry name" value="Ribosomal_uS10_CS"/>
</dbReference>
<dbReference type="InterPro" id="IPR027486">
    <property type="entry name" value="Ribosomal_uS10_dom"/>
</dbReference>
<dbReference type="InterPro" id="IPR036838">
    <property type="entry name" value="Ribosomal_uS10_dom_sf"/>
</dbReference>
<dbReference type="NCBIfam" id="NF001861">
    <property type="entry name" value="PRK00596.1"/>
    <property type="match status" value="1"/>
</dbReference>
<dbReference type="NCBIfam" id="TIGR01049">
    <property type="entry name" value="rpsJ_bact"/>
    <property type="match status" value="1"/>
</dbReference>
<dbReference type="PANTHER" id="PTHR11700">
    <property type="entry name" value="30S RIBOSOMAL PROTEIN S10 FAMILY MEMBER"/>
    <property type="match status" value="1"/>
</dbReference>
<dbReference type="Pfam" id="PF00338">
    <property type="entry name" value="Ribosomal_S10"/>
    <property type="match status" value="1"/>
</dbReference>
<dbReference type="PRINTS" id="PR00971">
    <property type="entry name" value="RIBOSOMALS10"/>
</dbReference>
<dbReference type="SMART" id="SM01403">
    <property type="entry name" value="Ribosomal_S10"/>
    <property type="match status" value="1"/>
</dbReference>
<dbReference type="SUPFAM" id="SSF54999">
    <property type="entry name" value="Ribosomal protein S10"/>
    <property type="match status" value="1"/>
</dbReference>
<dbReference type="PROSITE" id="PS00361">
    <property type="entry name" value="RIBOSOMAL_S10"/>
    <property type="match status" value="1"/>
</dbReference>
<evidence type="ECO:0000255" key="1">
    <source>
        <dbReference type="HAMAP-Rule" id="MF_00508"/>
    </source>
</evidence>
<evidence type="ECO:0000305" key="2"/>
<organism>
    <name type="scientific">Shewanella oneidensis (strain ATCC 700550 / JCM 31522 / CIP 106686 / LMG 19005 / NCIMB 14063 / MR-1)</name>
    <dbReference type="NCBI Taxonomy" id="211586"/>
    <lineage>
        <taxon>Bacteria</taxon>
        <taxon>Pseudomonadati</taxon>
        <taxon>Pseudomonadota</taxon>
        <taxon>Gammaproteobacteria</taxon>
        <taxon>Alteromonadales</taxon>
        <taxon>Shewanellaceae</taxon>
        <taxon>Shewanella</taxon>
    </lineage>
</organism>